<dbReference type="EC" id="3.4.11.23" evidence="1"/>
<dbReference type="EMBL" id="CP000720">
    <property type="protein sequence ID" value="ABS45791.1"/>
    <property type="molecule type" value="Genomic_DNA"/>
</dbReference>
<dbReference type="RefSeq" id="WP_012104798.1">
    <property type="nucleotide sequence ID" value="NC_009708.1"/>
</dbReference>
<dbReference type="SMR" id="A7FFX8"/>
<dbReference type="MEROPS" id="M17.004"/>
<dbReference type="KEGG" id="ypi:YpsIP31758_1175"/>
<dbReference type="HOGENOM" id="CLU_013734_7_1_6"/>
<dbReference type="Proteomes" id="UP000002412">
    <property type="component" value="Chromosome"/>
</dbReference>
<dbReference type="GO" id="GO:0005737">
    <property type="term" value="C:cytoplasm"/>
    <property type="evidence" value="ECO:0007669"/>
    <property type="project" value="UniProtKB-SubCell"/>
</dbReference>
<dbReference type="GO" id="GO:0030145">
    <property type="term" value="F:manganese ion binding"/>
    <property type="evidence" value="ECO:0007669"/>
    <property type="project" value="UniProtKB-UniRule"/>
</dbReference>
<dbReference type="GO" id="GO:0070006">
    <property type="term" value="F:metalloaminopeptidase activity"/>
    <property type="evidence" value="ECO:0007669"/>
    <property type="project" value="InterPro"/>
</dbReference>
<dbReference type="GO" id="GO:0006508">
    <property type="term" value="P:proteolysis"/>
    <property type="evidence" value="ECO:0007669"/>
    <property type="project" value="UniProtKB-UniRule"/>
</dbReference>
<dbReference type="CDD" id="cd00433">
    <property type="entry name" value="Peptidase_M17"/>
    <property type="match status" value="1"/>
</dbReference>
<dbReference type="FunFam" id="3.40.630.10:FF:000037">
    <property type="entry name" value="Peptidase B"/>
    <property type="match status" value="1"/>
</dbReference>
<dbReference type="Gene3D" id="3.40.630.10">
    <property type="entry name" value="Zn peptidases"/>
    <property type="match status" value="1"/>
</dbReference>
<dbReference type="HAMAP" id="MF_00504">
    <property type="entry name" value="Aminopeptidase_M17"/>
    <property type="match status" value="1"/>
</dbReference>
<dbReference type="InterPro" id="IPR011356">
    <property type="entry name" value="Leucine_aapep/pepB"/>
</dbReference>
<dbReference type="InterPro" id="IPR047620">
    <property type="entry name" value="M17_PepB-like_N"/>
</dbReference>
<dbReference type="InterPro" id="IPR008330">
    <property type="entry name" value="Pept_M17_PepB"/>
</dbReference>
<dbReference type="InterPro" id="IPR000819">
    <property type="entry name" value="Peptidase_M17_C"/>
</dbReference>
<dbReference type="NCBIfam" id="NF003450">
    <property type="entry name" value="PRK05015.1"/>
    <property type="match status" value="1"/>
</dbReference>
<dbReference type="PANTHER" id="PTHR11963">
    <property type="entry name" value="LEUCINE AMINOPEPTIDASE-RELATED"/>
    <property type="match status" value="1"/>
</dbReference>
<dbReference type="PANTHER" id="PTHR11963:SF20">
    <property type="entry name" value="PEPTIDASE B"/>
    <property type="match status" value="1"/>
</dbReference>
<dbReference type="Pfam" id="PF12404">
    <property type="entry name" value="DUF3663"/>
    <property type="match status" value="1"/>
</dbReference>
<dbReference type="Pfam" id="PF00883">
    <property type="entry name" value="Peptidase_M17"/>
    <property type="match status" value="1"/>
</dbReference>
<dbReference type="PIRSF" id="PIRSF036388">
    <property type="entry name" value="Ctsl_amnpptdse_B"/>
    <property type="match status" value="1"/>
</dbReference>
<dbReference type="PRINTS" id="PR00481">
    <property type="entry name" value="LAMNOPPTDASE"/>
</dbReference>
<dbReference type="SUPFAM" id="SSF53187">
    <property type="entry name" value="Zn-dependent exopeptidases"/>
    <property type="match status" value="1"/>
</dbReference>
<dbReference type="PROSITE" id="PS00631">
    <property type="entry name" value="CYTOSOL_AP"/>
    <property type="match status" value="1"/>
</dbReference>
<reference key="1">
    <citation type="journal article" date="2007" name="PLoS Genet.">
        <title>The complete genome sequence of Yersinia pseudotuberculosis IP31758, the causative agent of Far East scarlet-like fever.</title>
        <authorList>
            <person name="Eppinger M."/>
            <person name="Rosovitz M.J."/>
            <person name="Fricke W.F."/>
            <person name="Rasko D.A."/>
            <person name="Kokorina G."/>
            <person name="Fayolle C."/>
            <person name="Lindler L.E."/>
            <person name="Carniel E."/>
            <person name="Ravel J."/>
        </authorList>
    </citation>
    <scope>NUCLEOTIDE SEQUENCE [LARGE SCALE GENOMIC DNA]</scope>
    <source>
        <strain>IP 31758</strain>
    </source>
</reference>
<accession>A7FFX8</accession>
<comment type="function">
    <text evidence="1">Probably plays an important role in intracellular peptide degradation.</text>
</comment>
<comment type="catalytic activity">
    <reaction evidence="1">
        <text>Release of an N-terminal amino acid, Xaa, from a peptide or arylamide. Xaa is preferably Glu or Asp but may be other amino acids, including Leu, Met, His, Cys and Gln.</text>
        <dbReference type="EC" id="3.4.11.23"/>
    </reaction>
</comment>
<comment type="cofactor">
    <cofactor evidence="1">
        <name>Mn(2+)</name>
        <dbReference type="ChEBI" id="CHEBI:29035"/>
    </cofactor>
    <text evidence="1">Binds 2 manganese ions per subunit.</text>
</comment>
<comment type="subunit">
    <text evidence="1">Homohexamer.</text>
</comment>
<comment type="subcellular location">
    <subcellularLocation>
        <location evidence="1">Cytoplasm</location>
    </subcellularLocation>
</comment>
<comment type="similarity">
    <text evidence="1">Belongs to the peptidase M17 family.</text>
</comment>
<evidence type="ECO:0000255" key="1">
    <source>
        <dbReference type="HAMAP-Rule" id="MF_00504"/>
    </source>
</evidence>
<protein>
    <recommendedName>
        <fullName evidence="1">Peptidase B</fullName>
        <ecNumber evidence="1">3.4.11.23</ecNumber>
    </recommendedName>
    <alternativeName>
        <fullName evidence="1">Aminopeptidase B</fullName>
    </alternativeName>
</protein>
<keyword id="KW-0031">Aminopeptidase</keyword>
<keyword id="KW-0963">Cytoplasm</keyword>
<keyword id="KW-0378">Hydrolase</keyword>
<keyword id="KW-0464">Manganese</keyword>
<keyword id="KW-0479">Metal-binding</keyword>
<keyword id="KW-0645">Protease</keyword>
<organism>
    <name type="scientific">Yersinia pseudotuberculosis serotype O:1b (strain IP 31758)</name>
    <dbReference type="NCBI Taxonomy" id="349747"/>
    <lineage>
        <taxon>Bacteria</taxon>
        <taxon>Pseudomonadati</taxon>
        <taxon>Pseudomonadota</taxon>
        <taxon>Gammaproteobacteria</taxon>
        <taxon>Enterobacterales</taxon>
        <taxon>Yersiniaceae</taxon>
        <taxon>Yersinia</taxon>
    </lineage>
</organism>
<sequence length="432" mass="46518">MTTEIMQISLSHNPADARWGEKALISTNDQGVTIHLTSHDQLGGIQRAARKIDGQGIKQVKLAGEGWGLEQSWAFWQGFRGPKGQRSVVWAELPANEKTELEQRLQIIDWVRDTINAPAEDLGPEQLAKNAIDLLCAVSCDAVSYRITKGEDLREQNYAGIYTVGRGSDRAPVLLALDYNPTGNPDAPVMACLVGKGITFDSGGYSLKQSAFMDSMKSDMGGAATLTGALALAAARGLKERVKLYLCCADNMVSGNAFKLGDIIRYRNGKTVEIMNTDAEGRLVLADGLIDASEQNAPLIIDAATLTGAAKTALGNDYHALFSFDDELAQALLTSAHSEHELFWRLPLAEFHRSQLPSNFAELNNVAGGAYSAGASTAAAFLSHFVKNYQQGWLHIDCSATYRKSAVDQWSAGATGLGVRTVANLLLAQAKQ</sequence>
<name>PEPB_YERP3</name>
<gene>
    <name evidence="1" type="primary">pepB</name>
    <name type="ordered locus">YpsIP31758_1175</name>
</gene>
<proteinExistence type="inferred from homology"/>
<feature type="chain" id="PRO_1000060519" description="Peptidase B">
    <location>
        <begin position="1"/>
        <end position="432"/>
    </location>
</feature>
<feature type="active site" evidence="1">
    <location>
        <position position="208"/>
    </location>
</feature>
<feature type="active site" evidence="1">
    <location>
        <position position="282"/>
    </location>
</feature>
<feature type="binding site" evidence="1">
    <location>
        <position position="196"/>
    </location>
    <ligand>
        <name>Mn(2+)</name>
        <dbReference type="ChEBI" id="CHEBI:29035"/>
        <label>2</label>
    </ligand>
</feature>
<feature type="binding site" evidence="1">
    <location>
        <position position="201"/>
    </location>
    <ligand>
        <name>Mn(2+)</name>
        <dbReference type="ChEBI" id="CHEBI:29035"/>
        <label>1</label>
    </ligand>
</feature>
<feature type="binding site" evidence="1">
    <location>
        <position position="201"/>
    </location>
    <ligand>
        <name>Mn(2+)</name>
        <dbReference type="ChEBI" id="CHEBI:29035"/>
        <label>2</label>
    </ligand>
</feature>
<feature type="binding site" evidence="1">
    <location>
        <position position="219"/>
    </location>
    <ligand>
        <name>Mn(2+)</name>
        <dbReference type="ChEBI" id="CHEBI:29035"/>
        <label>2</label>
    </ligand>
</feature>
<feature type="binding site" evidence="1">
    <location>
        <position position="278"/>
    </location>
    <ligand>
        <name>Mn(2+)</name>
        <dbReference type="ChEBI" id="CHEBI:29035"/>
        <label>1</label>
    </ligand>
</feature>
<feature type="binding site" evidence="1">
    <location>
        <position position="280"/>
    </location>
    <ligand>
        <name>Mn(2+)</name>
        <dbReference type="ChEBI" id="CHEBI:29035"/>
        <label>1</label>
    </ligand>
</feature>
<feature type="binding site" evidence="1">
    <location>
        <position position="280"/>
    </location>
    <ligand>
        <name>Mn(2+)</name>
        <dbReference type="ChEBI" id="CHEBI:29035"/>
        <label>2</label>
    </ligand>
</feature>